<comment type="function">
    <text evidence="1">Catalytic subunit of a heterodimeric structure-specific endonuclease that resolves DNA secondary structures generated during DNA repair and recombination. Has endonuclease activity towards branched DNA substrates, introducing single-strand cuts in duplex DNA close to junctions with ss-DNA.</text>
</comment>
<comment type="cofactor">
    <cofactor evidence="1">
        <name>a divalent metal cation</name>
        <dbReference type="ChEBI" id="CHEBI:60240"/>
    </cofactor>
</comment>
<comment type="subunit">
    <text evidence="1">Forms a heterodimer with mus312/SLX4.</text>
</comment>
<comment type="subcellular location">
    <subcellularLocation>
        <location evidence="1">Nucleus</location>
    </subcellularLocation>
</comment>
<comment type="similarity">
    <text evidence="1">Belongs to the SLX1 family.</text>
</comment>
<reference key="1">
    <citation type="journal article" date="2005" name="Genome Res.">
        <title>Comparative genome sequencing of Drosophila pseudoobscura: chromosomal, gene, and cis-element evolution.</title>
        <authorList>
            <person name="Richards S."/>
            <person name="Liu Y."/>
            <person name="Bettencourt B.R."/>
            <person name="Hradecky P."/>
            <person name="Letovsky S."/>
            <person name="Nielsen R."/>
            <person name="Thornton K."/>
            <person name="Hubisz M.J."/>
            <person name="Chen R."/>
            <person name="Meisel R.P."/>
            <person name="Couronne O."/>
            <person name="Hua S."/>
            <person name="Smith M.A."/>
            <person name="Zhang P."/>
            <person name="Liu J."/>
            <person name="Bussemaker H.J."/>
            <person name="van Batenburg M.F."/>
            <person name="Howells S.L."/>
            <person name="Scherer S.E."/>
            <person name="Sodergren E."/>
            <person name="Matthews B.B."/>
            <person name="Crosby M.A."/>
            <person name="Schroeder A.J."/>
            <person name="Ortiz-Barrientos D."/>
            <person name="Rives C.M."/>
            <person name="Metzker M.L."/>
            <person name="Muzny D.M."/>
            <person name="Scott G."/>
            <person name="Steffen D."/>
            <person name="Wheeler D.A."/>
            <person name="Worley K.C."/>
            <person name="Havlak P."/>
            <person name="Durbin K.J."/>
            <person name="Egan A."/>
            <person name="Gill R."/>
            <person name="Hume J."/>
            <person name="Morgan M.B."/>
            <person name="Miner G."/>
            <person name="Hamilton C."/>
            <person name="Huang Y."/>
            <person name="Waldron L."/>
            <person name="Verduzco D."/>
            <person name="Clerc-Blankenburg K.P."/>
            <person name="Dubchak I."/>
            <person name="Noor M.A.F."/>
            <person name="Anderson W."/>
            <person name="White K.P."/>
            <person name="Clark A.G."/>
            <person name="Schaeffer S.W."/>
            <person name="Gelbart W.M."/>
            <person name="Weinstock G.M."/>
            <person name="Gibbs R.A."/>
        </authorList>
    </citation>
    <scope>NUCLEOTIDE SEQUENCE [LARGE SCALE GENOMIC DNA]</scope>
    <source>
        <strain>MV2-25 / Tucson 14011-0121.94</strain>
    </source>
</reference>
<accession>B5DXG8</accession>
<keyword id="KW-0227">DNA damage</keyword>
<keyword id="KW-0233">DNA recombination</keyword>
<keyword id="KW-0234">DNA repair</keyword>
<keyword id="KW-0255">Endonuclease</keyword>
<keyword id="KW-0378">Hydrolase</keyword>
<keyword id="KW-0479">Metal-binding</keyword>
<keyword id="KW-0540">Nuclease</keyword>
<keyword id="KW-0539">Nucleus</keyword>
<keyword id="KW-1185">Reference proteome</keyword>
<keyword id="KW-0862">Zinc</keyword>
<keyword id="KW-0863">Zinc-finger</keyword>
<name>SLX1_DROPS</name>
<protein>
    <recommendedName>
        <fullName evidence="1">Structure-specific endonuclease subunit SLX1 homolog</fullName>
        <ecNumber evidence="1">3.1.-.-</ecNumber>
    </recommendedName>
</protein>
<feature type="chain" id="PRO_0000383759" description="Structure-specific endonuclease subunit SLX1 homolog">
    <location>
        <begin position="1"/>
        <end position="291"/>
    </location>
</feature>
<feature type="domain" description="GIY-YIG" evidence="1">
    <location>
        <begin position="15"/>
        <end position="101"/>
    </location>
</feature>
<feature type="zinc finger region" description="SLX1-type" evidence="1">
    <location>
        <begin position="189"/>
        <end position="242"/>
    </location>
</feature>
<feature type="region of interest" description="Disordered" evidence="2">
    <location>
        <begin position="261"/>
        <end position="291"/>
    </location>
</feature>
<feature type="compositionally biased region" description="Acidic residues" evidence="2">
    <location>
        <begin position="264"/>
        <end position="291"/>
    </location>
</feature>
<gene>
    <name type="primary">slx1</name>
    <name type="ORF">GA27368</name>
</gene>
<sequence>MPPPPEDEAIAHKGHFYGVYLLCSQSLDSRYRAKCYVGFTVNPKRRIKQHNRGCDFGGAKKTSKKGPWQMVMIVHGFPNNISALQFEWAWQQPTLSTRLKIFPDLKRKKPKETHFDYNFRILNRMLSVGPWHRLALTIRWLETDYERAFDLPIPCHMEIVSGKVSISASQRKLEEATGTAPPVAWAHECHLCMQSIEQPERSRLGCTNPTCRLTCHMLCLASYLLGDEPGQYIPIGGECLLCETRLSWSALLQRKRLQLGVPEEMQDNEEEDLSDDGPDVDSDVEVQEFSD</sequence>
<organism>
    <name type="scientific">Drosophila pseudoobscura pseudoobscura</name>
    <name type="common">Fruit fly</name>
    <dbReference type="NCBI Taxonomy" id="46245"/>
    <lineage>
        <taxon>Eukaryota</taxon>
        <taxon>Metazoa</taxon>
        <taxon>Ecdysozoa</taxon>
        <taxon>Arthropoda</taxon>
        <taxon>Hexapoda</taxon>
        <taxon>Insecta</taxon>
        <taxon>Pterygota</taxon>
        <taxon>Neoptera</taxon>
        <taxon>Endopterygota</taxon>
        <taxon>Diptera</taxon>
        <taxon>Brachycera</taxon>
        <taxon>Muscomorpha</taxon>
        <taxon>Ephydroidea</taxon>
        <taxon>Drosophilidae</taxon>
        <taxon>Drosophila</taxon>
        <taxon>Sophophora</taxon>
    </lineage>
</organism>
<evidence type="ECO:0000255" key="1">
    <source>
        <dbReference type="HAMAP-Rule" id="MF_03100"/>
    </source>
</evidence>
<evidence type="ECO:0000256" key="2">
    <source>
        <dbReference type="SAM" id="MobiDB-lite"/>
    </source>
</evidence>
<proteinExistence type="inferred from homology"/>
<dbReference type="EC" id="3.1.-.-" evidence="1"/>
<dbReference type="EMBL" id="CM000070">
    <property type="protein sequence ID" value="EDY68263.1"/>
    <property type="molecule type" value="Genomic_DNA"/>
</dbReference>
<dbReference type="RefSeq" id="XP_002137705.1">
    <property type="nucleotide sequence ID" value="XM_002137669.3"/>
</dbReference>
<dbReference type="SMR" id="B5DXG8"/>
<dbReference type="FunCoup" id="B5DXG8">
    <property type="interactions" value="852"/>
</dbReference>
<dbReference type="STRING" id="46245.B5DXG8"/>
<dbReference type="EnsemblMetazoa" id="FBtr0285894">
    <property type="protein sequence ID" value="FBpp0284332"/>
    <property type="gene ID" value="FBgn0248735"/>
</dbReference>
<dbReference type="GeneID" id="6897560"/>
<dbReference type="KEGG" id="dpo:6897560"/>
<dbReference type="CTD" id="40578"/>
<dbReference type="eggNOG" id="KOG3005">
    <property type="taxonomic scope" value="Eukaryota"/>
</dbReference>
<dbReference type="HOGENOM" id="CLU_030739_0_0_1"/>
<dbReference type="InParanoid" id="B5DXG8"/>
<dbReference type="OMA" id="HNRGCDF"/>
<dbReference type="Proteomes" id="UP000001819">
    <property type="component" value="Chromosome 2"/>
</dbReference>
<dbReference type="Bgee" id="FBgn0248735">
    <property type="expression patterns" value="Expressed in female reproductive system and 2 other cell types or tissues"/>
</dbReference>
<dbReference type="GO" id="GO:0033557">
    <property type="term" value="C:Slx1-Slx4 complex"/>
    <property type="evidence" value="ECO:0007669"/>
    <property type="project" value="UniProtKB-UniRule"/>
</dbReference>
<dbReference type="GO" id="GO:0017108">
    <property type="term" value="F:5'-flap endonuclease activity"/>
    <property type="evidence" value="ECO:0007669"/>
    <property type="project" value="InterPro"/>
</dbReference>
<dbReference type="GO" id="GO:0008821">
    <property type="term" value="F:crossover junction DNA endonuclease activity"/>
    <property type="evidence" value="ECO:0007669"/>
    <property type="project" value="TreeGrafter"/>
</dbReference>
<dbReference type="GO" id="GO:0008270">
    <property type="term" value="F:zinc ion binding"/>
    <property type="evidence" value="ECO:0007669"/>
    <property type="project" value="UniProtKB-KW"/>
</dbReference>
<dbReference type="GO" id="GO:0000724">
    <property type="term" value="P:double-strand break repair via homologous recombination"/>
    <property type="evidence" value="ECO:0007669"/>
    <property type="project" value="TreeGrafter"/>
</dbReference>
<dbReference type="CDD" id="cd10455">
    <property type="entry name" value="GIY-YIG_SLX1"/>
    <property type="match status" value="1"/>
</dbReference>
<dbReference type="FunFam" id="3.40.1440.10:FF:000012">
    <property type="entry name" value="Structure-specific endonuclease subunit SLX1 homolog"/>
    <property type="match status" value="1"/>
</dbReference>
<dbReference type="Gene3D" id="3.40.1440.10">
    <property type="entry name" value="GIY-YIG endonuclease"/>
    <property type="match status" value="1"/>
</dbReference>
<dbReference type="Gene3D" id="3.30.40.10">
    <property type="entry name" value="Zinc/RING finger domain, C3HC4 (zinc finger)"/>
    <property type="match status" value="1"/>
</dbReference>
<dbReference type="HAMAP" id="MF_03100">
    <property type="entry name" value="Endonuc_su_Slx1"/>
    <property type="match status" value="1"/>
</dbReference>
<dbReference type="InterPro" id="IPR000305">
    <property type="entry name" value="GIY-YIG_endonuc"/>
</dbReference>
<dbReference type="InterPro" id="IPR035901">
    <property type="entry name" value="GIY-YIG_endonuc_sf"/>
</dbReference>
<dbReference type="InterPro" id="IPR027520">
    <property type="entry name" value="Slx1"/>
</dbReference>
<dbReference type="InterPro" id="IPR048749">
    <property type="entry name" value="SLX1_C"/>
</dbReference>
<dbReference type="InterPro" id="IPR050381">
    <property type="entry name" value="SLX1_endonuclease"/>
</dbReference>
<dbReference type="InterPro" id="IPR013083">
    <property type="entry name" value="Znf_RING/FYVE/PHD"/>
</dbReference>
<dbReference type="PANTHER" id="PTHR20208">
    <property type="entry name" value="STRUCTURE-SPECIFIC ENDONUCLEASE SUBUNIT SLX1"/>
    <property type="match status" value="1"/>
</dbReference>
<dbReference type="PANTHER" id="PTHR20208:SF10">
    <property type="entry name" value="STRUCTURE-SPECIFIC ENDONUCLEASE SUBUNIT SLX1"/>
    <property type="match status" value="1"/>
</dbReference>
<dbReference type="Pfam" id="PF01541">
    <property type="entry name" value="GIY-YIG"/>
    <property type="match status" value="1"/>
</dbReference>
<dbReference type="Pfam" id="PF21202">
    <property type="entry name" value="SLX1_C"/>
    <property type="match status" value="1"/>
</dbReference>
<dbReference type="SUPFAM" id="SSF82771">
    <property type="entry name" value="GIY-YIG endonuclease"/>
    <property type="match status" value="1"/>
</dbReference>
<dbReference type="PROSITE" id="PS50164">
    <property type="entry name" value="GIY_YIG"/>
    <property type="match status" value="1"/>
</dbReference>